<evidence type="ECO:0000255" key="1">
    <source>
        <dbReference type="HAMAP-Rule" id="MF_00434"/>
    </source>
</evidence>
<accession>Q1IP68</accession>
<name>PHS_KORVE</name>
<reference key="1">
    <citation type="journal article" date="2009" name="Appl. Environ. Microbiol.">
        <title>Three genomes from the phylum Acidobacteria provide insight into the lifestyles of these microorganisms in soils.</title>
        <authorList>
            <person name="Ward N.L."/>
            <person name="Challacombe J.F."/>
            <person name="Janssen P.H."/>
            <person name="Henrissat B."/>
            <person name="Coutinho P.M."/>
            <person name="Wu M."/>
            <person name="Xie G."/>
            <person name="Haft D.H."/>
            <person name="Sait M."/>
            <person name="Badger J."/>
            <person name="Barabote R.D."/>
            <person name="Bradley B."/>
            <person name="Brettin T.S."/>
            <person name="Brinkac L.M."/>
            <person name="Bruce D."/>
            <person name="Creasy T."/>
            <person name="Daugherty S.C."/>
            <person name="Davidsen T.M."/>
            <person name="DeBoy R.T."/>
            <person name="Detter J.C."/>
            <person name="Dodson R.J."/>
            <person name="Durkin A.S."/>
            <person name="Ganapathy A."/>
            <person name="Gwinn-Giglio M."/>
            <person name="Han C.S."/>
            <person name="Khouri H."/>
            <person name="Kiss H."/>
            <person name="Kothari S.P."/>
            <person name="Madupu R."/>
            <person name="Nelson K.E."/>
            <person name="Nelson W.C."/>
            <person name="Paulsen I."/>
            <person name="Penn K."/>
            <person name="Ren Q."/>
            <person name="Rosovitz M.J."/>
            <person name="Selengut J.D."/>
            <person name="Shrivastava S."/>
            <person name="Sullivan S.A."/>
            <person name="Tapia R."/>
            <person name="Thompson L.S."/>
            <person name="Watkins K.L."/>
            <person name="Yang Q."/>
            <person name="Yu C."/>
            <person name="Zafar N."/>
            <person name="Zhou L."/>
            <person name="Kuske C.R."/>
        </authorList>
    </citation>
    <scope>NUCLEOTIDE SEQUENCE [LARGE SCALE GENOMIC DNA]</scope>
    <source>
        <strain>Ellin345</strain>
    </source>
</reference>
<dbReference type="EC" id="4.2.1.96" evidence="1"/>
<dbReference type="EMBL" id="CP000360">
    <property type="protein sequence ID" value="ABF41332.1"/>
    <property type="molecule type" value="Genomic_DNA"/>
</dbReference>
<dbReference type="RefSeq" id="WP_011523133.1">
    <property type="nucleotide sequence ID" value="NC_008009.1"/>
</dbReference>
<dbReference type="SMR" id="Q1IP68"/>
<dbReference type="STRING" id="204669.Acid345_2331"/>
<dbReference type="EnsemblBacteria" id="ABF41332">
    <property type="protein sequence ID" value="ABF41332"/>
    <property type="gene ID" value="Acid345_2331"/>
</dbReference>
<dbReference type="KEGG" id="aba:Acid345_2331"/>
<dbReference type="eggNOG" id="COG2154">
    <property type="taxonomic scope" value="Bacteria"/>
</dbReference>
<dbReference type="HOGENOM" id="CLU_081974_4_0_0"/>
<dbReference type="OrthoDB" id="9800108at2"/>
<dbReference type="Proteomes" id="UP000002432">
    <property type="component" value="Chromosome"/>
</dbReference>
<dbReference type="GO" id="GO:0008124">
    <property type="term" value="F:4-alpha-hydroxytetrahydrobiopterin dehydratase activity"/>
    <property type="evidence" value="ECO:0007669"/>
    <property type="project" value="UniProtKB-UniRule"/>
</dbReference>
<dbReference type="GO" id="GO:0006729">
    <property type="term" value="P:tetrahydrobiopterin biosynthetic process"/>
    <property type="evidence" value="ECO:0007669"/>
    <property type="project" value="InterPro"/>
</dbReference>
<dbReference type="CDD" id="cd00488">
    <property type="entry name" value="PCD_DCoH"/>
    <property type="match status" value="1"/>
</dbReference>
<dbReference type="Gene3D" id="3.30.1360.20">
    <property type="entry name" value="Transcriptional coactivator/pterin dehydratase"/>
    <property type="match status" value="1"/>
</dbReference>
<dbReference type="HAMAP" id="MF_00434">
    <property type="entry name" value="Pterin_4_alpha"/>
    <property type="match status" value="1"/>
</dbReference>
<dbReference type="InterPro" id="IPR036428">
    <property type="entry name" value="PCD_sf"/>
</dbReference>
<dbReference type="InterPro" id="IPR001533">
    <property type="entry name" value="Pterin_deHydtase"/>
</dbReference>
<dbReference type="NCBIfam" id="NF002017">
    <property type="entry name" value="PRK00823.1-2"/>
    <property type="match status" value="1"/>
</dbReference>
<dbReference type="PANTHER" id="PTHR12599">
    <property type="entry name" value="PTERIN-4-ALPHA-CARBINOLAMINE DEHYDRATASE"/>
    <property type="match status" value="1"/>
</dbReference>
<dbReference type="PANTHER" id="PTHR12599:SF0">
    <property type="entry name" value="PTERIN-4-ALPHA-CARBINOLAMINE DEHYDRATASE"/>
    <property type="match status" value="1"/>
</dbReference>
<dbReference type="Pfam" id="PF01329">
    <property type="entry name" value="Pterin_4a"/>
    <property type="match status" value="1"/>
</dbReference>
<dbReference type="SUPFAM" id="SSF55248">
    <property type="entry name" value="PCD-like"/>
    <property type="match status" value="1"/>
</dbReference>
<protein>
    <recommendedName>
        <fullName evidence="1">Putative pterin-4-alpha-carbinolamine dehydratase</fullName>
        <shortName evidence="1">PHS</shortName>
        <ecNumber evidence="1">4.2.1.96</ecNumber>
    </recommendedName>
    <alternativeName>
        <fullName evidence="1">4-alpha-hydroxy-tetrahydropterin dehydratase</fullName>
    </alternativeName>
    <alternativeName>
        <fullName evidence="1">Pterin carbinolamine dehydratase</fullName>
        <shortName evidence="1">PCD</shortName>
    </alternativeName>
</protein>
<organism>
    <name type="scientific">Koribacter versatilis (strain Ellin345)</name>
    <dbReference type="NCBI Taxonomy" id="204669"/>
    <lineage>
        <taxon>Bacteria</taxon>
        <taxon>Pseudomonadati</taxon>
        <taxon>Acidobacteriota</taxon>
        <taxon>Terriglobia</taxon>
        <taxon>Terriglobales</taxon>
        <taxon>Candidatus Korobacteraceae</taxon>
        <taxon>Candidatus Korobacter</taxon>
    </lineage>
</organism>
<comment type="catalytic activity">
    <reaction evidence="1">
        <text>(4aS,6R)-4a-hydroxy-L-erythro-5,6,7,8-tetrahydrobiopterin = (6R)-L-erythro-6,7-dihydrobiopterin + H2O</text>
        <dbReference type="Rhea" id="RHEA:11920"/>
        <dbReference type="ChEBI" id="CHEBI:15377"/>
        <dbReference type="ChEBI" id="CHEBI:15642"/>
        <dbReference type="ChEBI" id="CHEBI:43120"/>
        <dbReference type="EC" id="4.2.1.96"/>
    </reaction>
</comment>
<comment type="similarity">
    <text evidence="1">Belongs to the pterin-4-alpha-carbinolamine dehydratase family.</text>
</comment>
<gene>
    <name type="ordered locus">Acid345_2331</name>
</gene>
<sequence length="94" mass="10426">MSKTLTDPELQTALGSLHGWAKNGIAIERKYEFKDFLEAMKFVNKVADAAEAAGHHPDIQIVYSRVTLQLTSHDSGGVTHRDIKMAGRLNEIHP</sequence>
<feature type="chain" id="PRO_1000192907" description="Putative pterin-4-alpha-carbinolamine dehydratase">
    <location>
        <begin position="1"/>
        <end position="94"/>
    </location>
</feature>
<proteinExistence type="inferred from homology"/>
<keyword id="KW-0456">Lyase</keyword>
<keyword id="KW-1185">Reference proteome</keyword>